<feature type="chain" id="PRO_0000270350" description="Methionine import ATP-binding protein MetN 1">
    <location>
        <begin position="1"/>
        <end position="335"/>
    </location>
</feature>
<feature type="domain" description="ABC transporter" evidence="1">
    <location>
        <begin position="2"/>
        <end position="242"/>
    </location>
</feature>
<feature type="binding site" evidence="1">
    <location>
        <begin position="38"/>
        <end position="45"/>
    </location>
    <ligand>
        <name>ATP</name>
        <dbReference type="ChEBI" id="CHEBI:30616"/>
    </ligand>
</feature>
<dbReference type="EC" id="7.4.2.11" evidence="1"/>
<dbReference type="EMBL" id="CP000094">
    <property type="protein sequence ID" value="ABA71809.1"/>
    <property type="molecule type" value="Genomic_DNA"/>
</dbReference>
<dbReference type="RefSeq" id="WP_011331788.1">
    <property type="nucleotide sequence ID" value="NC_007492.2"/>
</dbReference>
<dbReference type="SMR" id="Q3KK97"/>
<dbReference type="KEGG" id="pfo:Pfl01_0065"/>
<dbReference type="eggNOG" id="COG1135">
    <property type="taxonomic scope" value="Bacteria"/>
</dbReference>
<dbReference type="HOGENOM" id="CLU_000604_1_3_6"/>
<dbReference type="Proteomes" id="UP000002704">
    <property type="component" value="Chromosome"/>
</dbReference>
<dbReference type="GO" id="GO:0005886">
    <property type="term" value="C:plasma membrane"/>
    <property type="evidence" value="ECO:0007669"/>
    <property type="project" value="UniProtKB-SubCell"/>
</dbReference>
<dbReference type="GO" id="GO:0033232">
    <property type="term" value="F:ABC-type D-methionine transporter activity"/>
    <property type="evidence" value="ECO:0007669"/>
    <property type="project" value="UniProtKB-EC"/>
</dbReference>
<dbReference type="GO" id="GO:0005524">
    <property type="term" value="F:ATP binding"/>
    <property type="evidence" value="ECO:0007669"/>
    <property type="project" value="UniProtKB-KW"/>
</dbReference>
<dbReference type="GO" id="GO:0016887">
    <property type="term" value="F:ATP hydrolysis activity"/>
    <property type="evidence" value="ECO:0007669"/>
    <property type="project" value="InterPro"/>
</dbReference>
<dbReference type="CDD" id="cd03258">
    <property type="entry name" value="ABC_MetN_methionine_transporter"/>
    <property type="match status" value="1"/>
</dbReference>
<dbReference type="FunFam" id="3.40.50.300:FF:000056">
    <property type="entry name" value="Cell division ATP-binding protein FtsE"/>
    <property type="match status" value="1"/>
</dbReference>
<dbReference type="FunFam" id="3.30.70.260:FF:000038">
    <property type="entry name" value="Methionine import ATP-binding protein MetN"/>
    <property type="match status" value="1"/>
</dbReference>
<dbReference type="Gene3D" id="3.30.70.260">
    <property type="match status" value="1"/>
</dbReference>
<dbReference type="Gene3D" id="3.40.50.300">
    <property type="entry name" value="P-loop containing nucleotide triphosphate hydrolases"/>
    <property type="match status" value="1"/>
</dbReference>
<dbReference type="InterPro" id="IPR003593">
    <property type="entry name" value="AAA+_ATPase"/>
</dbReference>
<dbReference type="InterPro" id="IPR003439">
    <property type="entry name" value="ABC_transporter-like_ATP-bd"/>
</dbReference>
<dbReference type="InterPro" id="IPR017871">
    <property type="entry name" value="ABC_transporter-like_CS"/>
</dbReference>
<dbReference type="InterPro" id="IPR045865">
    <property type="entry name" value="ACT-like_dom_sf"/>
</dbReference>
<dbReference type="InterPro" id="IPR041701">
    <property type="entry name" value="MetN_ABC"/>
</dbReference>
<dbReference type="InterPro" id="IPR050086">
    <property type="entry name" value="MetN_ABC_transporter-like"/>
</dbReference>
<dbReference type="InterPro" id="IPR018449">
    <property type="entry name" value="NIL_domain"/>
</dbReference>
<dbReference type="InterPro" id="IPR027417">
    <property type="entry name" value="P-loop_NTPase"/>
</dbReference>
<dbReference type="PANTHER" id="PTHR43166">
    <property type="entry name" value="AMINO ACID IMPORT ATP-BINDING PROTEIN"/>
    <property type="match status" value="1"/>
</dbReference>
<dbReference type="PANTHER" id="PTHR43166:SF30">
    <property type="entry name" value="METHIONINE IMPORT ATP-BINDING PROTEIN METN"/>
    <property type="match status" value="1"/>
</dbReference>
<dbReference type="Pfam" id="PF00005">
    <property type="entry name" value="ABC_tran"/>
    <property type="match status" value="1"/>
</dbReference>
<dbReference type="Pfam" id="PF09383">
    <property type="entry name" value="NIL"/>
    <property type="match status" value="1"/>
</dbReference>
<dbReference type="SMART" id="SM00382">
    <property type="entry name" value="AAA"/>
    <property type="match status" value="1"/>
</dbReference>
<dbReference type="SMART" id="SM00930">
    <property type="entry name" value="NIL"/>
    <property type="match status" value="1"/>
</dbReference>
<dbReference type="SUPFAM" id="SSF55021">
    <property type="entry name" value="ACT-like"/>
    <property type="match status" value="1"/>
</dbReference>
<dbReference type="SUPFAM" id="SSF52540">
    <property type="entry name" value="P-loop containing nucleoside triphosphate hydrolases"/>
    <property type="match status" value="1"/>
</dbReference>
<dbReference type="PROSITE" id="PS00211">
    <property type="entry name" value="ABC_TRANSPORTER_1"/>
    <property type="match status" value="1"/>
</dbReference>
<dbReference type="PROSITE" id="PS50893">
    <property type="entry name" value="ABC_TRANSPORTER_2"/>
    <property type="match status" value="1"/>
</dbReference>
<dbReference type="PROSITE" id="PS51264">
    <property type="entry name" value="METN"/>
    <property type="match status" value="1"/>
</dbReference>
<gene>
    <name evidence="1" type="primary">metN1</name>
    <name type="ordered locus">Pfl01_0065</name>
</gene>
<reference key="1">
    <citation type="journal article" date="2009" name="Genome Biol.">
        <title>Genomic and genetic analyses of diversity and plant interactions of Pseudomonas fluorescens.</title>
        <authorList>
            <person name="Silby M.W."/>
            <person name="Cerdeno-Tarraga A.M."/>
            <person name="Vernikos G.S."/>
            <person name="Giddens S.R."/>
            <person name="Jackson R.W."/>
            <person name="Preston G.M."/>
            <person name="Zhang X.-X."/>
            <person name="Moon C.D."/>
            <person name="Gehrig S.M."/>
            <person name="Godfrey S.A.C."/>
            <person name="Knight C.G."/>
            <person name="Malone J.G."/>
            <person name="Robinson Z."/>
            <person name="Spiers A.J."/>
            <person name="Harris S."/>
            <person name="Challis G.L."/>
            <person name="Yaxley A.M."/>
            <person name="Harris D."/>
            <person name="Seeger K."/>
            <person name="Murphy L."/>
            <person name="Rutter S."/>
            <person name="Squares R."/>
            <person name="Quail M.A."/>
            <person name="Saunders E."/>
            <person name="Mavromatis K."/>
            <person name="Brettin T.S."/>
            <person name="Bentley S.D."/>
            <person name="Hothersall J."/>
            <person name="Stephens E."/>
            <person name="Thomas C.M."/>
            <person name="Parkhill J."/>
            <person name="Levy S.B."/>
            <person name="Rainey P.B."/>
            <person name="Thomson N.R."/>
        </authorList>
    </citation>
    <scope>NUCLEOTIDE SEQUENCE [LARGE SCALE GENOMIC DNA]</scope>
    <source>
        <strain>Pf0-1</strain>
    </source>
</reference>
<organism>
    <name type="scientific">Pseudomonas fluorescens (strain Pf0-1)</name>
    <dbReference type="NCBI Taxonomy" id="205922"/>
    <lineage>
        <taxon>Bacteria</taxon>
        <taxon>Pseudomonadati</taxon>
        <taxon>Pseudomonadota</taxon>
        <taxon>Gammaproteobacteria</taxon>
        <taxon>Pseudomonadales</taxon>
        <taxon>Pseudomonadaceae</taxon>
        <taxon>Pseudomonas</taxon>
    </lineage>
</organism>
<evidence type="ECO:0000255" key="1">
    <source>
        <dbReference type="HAMAP-Rule" id="MF_01719"/>
    </source>
</evidence>
<comment type="function">
    <text evidence="1">Part of the ABC transporter complex MetNIQ involved in methionine import. Responsible for energy coupling to the transport system.</text>
</comment>
<comment type="catalytic activity">
    <reaction evidence="1">
        <text>L-methionine(out) + ATP + H2O = L-methionine(in) + ADP + phosphate + H(+)</text>
        <dbReference type="Rhea" id="RHEA:29779"/>
        <dbReference type="ChEBI" id="CHEBI:15377"/>
        <dbReference type="ChEBI" id="CHEBI:15378"/>
        <dbReference type="ChEBI" id="CHEBI:30616"/>
        <dbReference type="ChEBI" id="CHEBI:43474"/>
        <dbReference type="ChEBI" id="CHEBI:57844"/>
        <dbReference type="ChEBI" id="CHEBI:456216"/>
        <dbReference type="EC" id="7.4.2.11"/>
    </reaction>
</comment>
<comment type="catalytic activity">
    <reaction evidence="1">
        <text>D-methionine(out) + ATP + H2O = D-methionine(in) + ADP + phosphate + H(+)</text>
        <dbReference type="Rhea" id="RHEA:29767"/>
        <dbReference type="ChEBI" id="CHEBI:15377"/>
        <dbReference type="ChEBI" id="CHEBI:15378"/>
        <dbReference type="ChEBI" id="CHEBI:30616"/>
        <dbReference type="ChEBI" id="CHEBI:43474"/>
        <dbReference type="ChEBI" id="CHEBI:57932"/>
        <dbReference type="ChEBI" id="CHEBI:456216"/>
        <dbReference type="EC" id="7.4.2.11"/>
    </reaction>
</comment>
<comment type="subunit">
    <text evidence="1">The complex is composed of two ATP-binding proteins (MetN), two transmembrane proteins (MetI) and a solute-binding protein (MetQ).</text>
</comment>
<comment type="subcellular location">
    <subcellularLocation>
        <location evidence="1">Cell inner membrane</location>
        <topology evidence="1">Peripheral membrane protein</topology>
    </subcellularLocation>
</comment>
<comment type="similarity">
    <text evidence="1">Belongs to the ABC transporter superfamily. Methionine importer (TC 3.A.1.24) family.</text>
</comment>
<keyword id="KW-0029">Amino-acid transport</keyword>
<keyword id="KW-0067">ATP-binding</keyword>
<keyword id="KW-0997">Cell inner membrane</keyword>
<keyword id="KW-1003">Cell membrane</keyword>
<keyword id="KW-0472">Membrane</keyword>
<keyword id="KW-0547">Nucleotide-binding</keyword>
<keyword id="KW-1278">Translocase</keyword>
<keyword id="KW-0813">Transport</keyword>
<accession>Q3KK97</accession>
<protein>
    <recommendedName>
        <fullName evidence="1">Methionine import ATP-binding protein MetN 1</fullName>
        <ecNumber evidence="1">7.4.2.11</ecNumber>
    </recommendedName>
</protein>
<name>METN1_PSEPF</name>
<sequence>MIEFQNVHKTYRVAGKDITALHPTSFSIENGQVFGLIGHSGAGKSTLLRLINRLEQSSGGKIIVDGEEVTALDANGLRRFRQQVGMIFQHFNLLASKTVADNVALPLTLAGELSRAEIDQRVAELLARVGLSDHAKKYPAQLSGGQKQRVGIARALATKPKILLCDEATSALDPQTTASVLQLLAEINRELKLTIVLITHEMDVIRRVCDQVGVMDAGVIVEQGSVADVFLHPKHPTTKRFVQESEQIDESEQRDDFAHVPGRIVRLTFQGEATYAPLLGTVARETGVDYSILAGRIDRIKDIPYGQLTLAVTGGDMDAAFARFTAADVHMEVLR</sequence>
<proteinExistence type="inferred from homology"/>